<dbReference type="EMBL" id="AF286024">
    <property type="protein sequence ID" value="AAF97249.2"/>
    <property type="molecule type" value="mRNA"/>
</dbReference>
<dbReference type="RefSeq" id="NP_001027996.1">
    <property type="nucleotide sequence ID" value="NM_001032824.1"/>
</dbReference>
<dbReference type="SMR" id="Q9MYW9"/>
<dbReference type="STRING" id="9544.ENSMMUP00000043883"/>
<dbReference type="BindingDB" id="Q9MYW9"/>
<dbReference type="ChEMBL" id="CHEMBL5799"/>
<dbReference type="GlyCosmos" id="Q9MYW9">
    <property type="glycosylation" value="5 sites, No reported glycans"/>
</dbReference>
<dbReference type="PaxDb" id="9544-ENSMMUP00000029873"/>
<dbReference type="GeneID" id="574141"/>
<dbReference type="KEGG" id="mcc:574141"/>
<dbReference type="CTD" id="4988"/>
<dbReference type="eggNOG" id="KOG3656">
    <property type="taxonomic scope" value="Eukaryota"/>
</dbReference>
<dbReference type="InParanoid" id="Q9MYW9"/>
<dbReference type="OrthoDB" id="6076970at2759"/>
<dbReference type="PRO" id="PR:Q9MYW9"/>
<dbReference type="Proteomes" id="UP000006718">
    <property type="component" value="Unassembled WGS sequence"/>
</dbReference>
<dbReference type="GO" id="GO:0030424">
    <property type="term" value="C:axon"/>
    <property type="evidence" value="ECO:0000250"/>
    <property type="project" value="UniProtKB"/>
</dbReference>
<dbReference type="GO" id="GO:0030425">
    <property type="term" value="C:dendrite"/>
    <property type="evidence" value="ECO:0000250"/>
    <property type="project" value="UniProtKB"/>
</dbReference>
<dbReference type="GO" id="GO:0005768">
    <property type="term" value="C:endosome"/>
    <property type="evidence" value="ECO:0000250"/>
    <property type="project" value="UniProtKB"/>
</dbReference>
<dbReference type="GO" id="GO:0043005">
    <property type="term" value="C:neuron projection"/>
    <property type="evidence" value="ECO:0000318"/>
    <property type="project" value="GO_Central"/>
</dbReference>
<dbReference type="GO" id="GO:0043204">
    <property type="term" value="C:perikaryon"/>
    <property type="evidence" value="ECO:0007669"/>
    <property type="project" value="UniProtKB-SubCell"/>
</dbReference>
<dbReference type="GO" id="GO:0005886">
    <property type="term" value="C:plasma membrane"/>
    <property type="evidence" value="ECO:0000250"/>
    <property type="project" value="UniProtKB"/>
</dbReference>
<dbReference type="GO" id="GO:0045202">
    <property type="term" value="C:synapse"/>
    <property type="evidence" value="ECO:0007669"/>
    <property type="project" value="GOC"/>
</dbReference>
<dbReference type="GO" id="GO:0004979">
    <property type="term" value="F:beta-endorphin receptor activity"/>
    <property type="evidence" value="ECO:0000318"/>
    <property type="project" value="GO_Central"/>
</dbReference>
<dbReference type="GO" id="GO:0004930">
    <property type="term" value="F:G protein-coupled receptor activity"/>
    <property type="evidence" value="ECO:0000250"/>
    <property type="project" value="UniProtKB"/>
</dbReference>
<dbReference type="GO" id="GO:0001965">
    <property type="term" value="F:G-protein alpha-subunit binding"/>
    <property type="evidence" value="ECO:0000250"/>
    <property type="project" value="UniProtKB"/>
</dbReference>
<dbReference type="GO" id="GO:0031681">
    <property type="term" value="F:G-protein beta-subunit binding"/>
    <property type="evidence" value="ECO:0000318"/>
    <property type="project" value="GO_Central"/>
</dbReference>
<dbReference type="GO" id="GO:0038047">
    <property type="term" value="F:morphine receptor activity"/>
    <property type="evidence" value="ECO:0000250"/>
    <property type="project" value="UniProtKB"/>
</dbReference>
<dbReference type="GO" id="GO:0042923">
    <property type="term" value="F:neuropeptide binding"/>
    <property type="evidence" value="ECO:0000318"/>
    <property type="project" value="GO_Central"/>
</dbReference>
<dbReference type="GO" id="GO:0005245">
    <property type="term" value="F:voltage-gated calcium channel activity"/>
    <property type="evidence" value="ECO:0000250"/>
    <property type="project" value="UniProtKB"/>
</dbReference>
<dbReference type="GO" id="GO:0007197">
    <property type="term" value="P:adenylate cyclase-inhibiting G protein-coupled acetylcholine receptor signaling pathway"/>
    <property type="evidence" value="ECO:0000250"/>
    <property type="project" value="UniProtKB"/>
</dbReference>
<dbReference type="GO" id="GO:0007193">
    <property type="term" value="P:adenylate cyclase-inhibiting G protein-coupled receptor signaling pathway"/>
    <property type="evidence" value="ECO:0000250"/>
    <property type="project" value="UniProtKB"/>
</dbReference>
<dbReference type="GO" id="GO:0038003">
    <property type="term" value="P:G protein-coupled opioid receptor signaling pathway"/>
    <property type="evidence" value="ECO:0000250"/>
    <property type="project" value="UniProtKB"/>
</dbReference>
<dbReference type="GO" id="GO:0051481">
    <property type="term" value="P:negative regulation of cytosolic calcium ion concentration"/>
    <property type="evidence" value="ECO:0000250"/>
    <property type="project" value="UniProtKB"/>
</dbReference>
<dbReference type="GO" id="GO:0045019">
    <property type="term" value="P:negative regulation of nitric oxide biosynthetic process"/>
    <property type="evidence" value="ECO:0000250"/>
    <property type="project" value="UniProtKB"/>
</dbReference>
<dbReference type="GO" id="GO:0061358">
    <property type="term" value="P:negative regulation of Wnt protein secretion"/>
    <property type="evidence" value="ECO:0000250"/>
    <property type="project" value="UniProtKB"/>
</dbReference>
<dbReference type="GO" id="GO:0007218">
    <property type="term" value="P:neuropeptide signaling pathway"/>
    <property type="evidence" value="ECO:0000318"/>
    <property type="project" value="GO_Central"/>
</dbReference>
<dbReference type="GO" id="GO:0007200">
    <property type="term" value="P:phospholipase C-activating G protein-coupled receptor signaling pathway"/>
    <property type="evidence" value="ECO:0000250"/>
    <property type="project" value="UniProtKB"/>
</dbReference>
<dbReference type="GO" id="GO:0070374">
    <property type="term" value="P:positive regulation of ERK1 and ERK2 cascade"/>
    <property type="evidence" value="ECO:0000250"/>
    <property type="project" value="UniProtKB"/>
</dbReference>
<dbReference type="GO" id="GO:0050769">
    <property type="term" value="P:positive regulation of neurogenesis"/>
    <property type="evidence" value="ECO:0000250"/>
    <property type="project" value="UniProtKB"/>
</dbReference>
<dbReference type="GO" id="GO:2000310">
    <property type="term" value="P:regulation of NMDA receptor activity"/>
    <property type="evidence" value="ECO:0000250"/>
    <property type="project" value="UniProtKB"/>
</dbReference>
<dbReference type="GO" id="GO:0019233">
    <property type="term" value="P:sensory perception of pain"/>
    <property type="evidence" value="ECO:0000250"/>
    <property type="project" value="UniProtKB"/>
</dbReference>
<dbReference type="CDD" id="cd15090">
    <property type="entry name" value="7tmA_Mu_opioid_R"/>
    <property type="match status" value="1"/>
</dbReference>
<dbReference type="FunFam" id="1.20.1070.10:FF:000014">
    <property type="entry name" value="Kappa-type opioid receptor 1"/>
    <property type="match status" value="1"/>
</dbReference>
<dbReference type="Gene3D" id="1.20.1070.10">
    <property type="entry name" value="Rhodopsin 7-helix transmembrane proteins"/>
    <property type="match status" value="1"/>
</dbReference>
<dbReference type="InterPro" id="IPR000276">
    <property type="entry name" value="GPCR_Rhodpsn"/>
</dbReference>
<dbReference type="InterPro" id="IPR017452">
    <property type="entry name" value="GPCR_Rhodpsn_7TM"/>
</dbReference>
<dbReference type="InterPro" id="IPR000105">
    <property type="entry name" value="Mu_opioid_rcpt"/>
</dbReference>
<dbReference type="InterPro" id="IPR001418">
    <property type="entry name" value="Opioid_rcpt"/>
</dbReference>
<dbReference type="PANTHER" id="PTHR24229:SF7">
    <property type="entry name" value="MU-TYPE OPIOID RECEPTOR"/>
    <property type="match status" value="1"/>
</dbReference>
<dbReference type="PANTHER" id="PTHR24229">
    <property type="entry name" value="NEUROPEPTIDES RECEPTOR"/>
    <property type="match status" value="1"/>
</dbReference>
<dbReference type="Pfam" id="PF00001">
    <property type="entry name" value="7tm_1"/>
    <property type="match status" value="1"/>
</dbReference>
<dbReference type="PRINTS" id="PR00237">
    <property type="entry name" value="GPCRRHODOPSN"/>
</dbReference>
<dbReference type="PRINTS" id="PR00537">
    <property type="entry name" value="MUOPIOIDR"/>
</dbReference>
<dbReference type="PRINTS" id="PR00384">
    <property type="entry name" value="OPIOIDR"/>
</dbReference>
<dbReference type="SUPFAM" id="SSF81321">
    <property type="entry name" value="Family A G protein-coupled receptor-like"/>
    <property type="match status" value="1"/>
</dbReference>
<dbReference type="PROSITE" id="PS00237">
    <property type="entry name" value="G_PROTEIN_RECEP_F1_1"/>
    <property type="match status" value="1"/>
</dbReference>
<dbReference type="PROSITE" id="PS50262">
    <property type="entry name" value="G_PROTEIN_RECEP_F1_2"/>
    <property type="match status" value="1"/>
</dbReference>
<reference key="1">
    <citation type="journal article" date="2004" name="Mol. Psychiatry">
        <title>A mu-opioid receptor single nucleotide polymorphism in rhesus monkey: association with stress response and aggression.</title>
        <authorList>
            <person name="Miller G.M."/>
            <person name="Bendor J."/>
            <person name="Tiefenbacher S."/>
            <person name="Yang H."/>
            <person name="Novak M.A."/>
            <person name="Madras B.K."/>
        </authorList>
    </citation>
    <scope>NUCLEOTIDE SEQUENCE [MRNA]</scope>
    <scope>VARIANTS PRO-26; ASN-344 AND PRO-392</scope>
    <source>
        <tissue>Corpus striatum</tissue>
    </source>
</reference>
<name>OPRM_MACMU</name>
<gene>
    <name type="primary">OPRM1</name>
    <name type="synonym">MOR1</name>
</gene>
<sequence>MDSSAVPTNASNCTDALAHSSCSPARSPGSWVNLSHLDGNLSDPCGPNRTDLGGRDSLCPPTGSPSMITAITIMALYSIVCVVGLFGNFLVMYVIVRYTKMKTATNIYIFNLALADALVTSTLPFQSVNYLMGTWPFGTILCKIVISIDYYNMSTSIFTLCTMSVDRYIAVCHPVKALDFRTPRNAKIINVCNWILSSAIGLPVMFMATTKYRQGSIDCTLTFSHPSWYWENLLKICVFIFAFIMPVLIITVCYGLMILRLKSVRMLSGSKEKDRNLRRITRMVLVVVAVFIICWTPIHIYVIIKALVTIPETTFQTVSWHFCIALGYTNSCLNPVLYAFLDEDFKRCFREFCIPTSSNIEQQNSTRIRQNTRDHPSTANTVDRTNHQLENLEAETAPLP</sequence>
<accession>Q9MYW9</accession>
<protein>
    <recommendedName>
        <fullName>Mu-type opioid receptor</fullName>
        <shortName>M-OR-1</shortName>
        <shortName>MOR-1</shortName>
    </recommendedName>
</protein>
<organism>
    <name type="scientific">Macaca mulatta</name>
    <name type="common">Rhesus macaque</name>
    <dbReference type="NCBI Taxonomy" id="9544"/>
    <lineage>
        <taxon>Eukaryota</taxon>
        <taxon>Metazoa</taxon>
        <taxon>Chordata</taxon>
        <taxon>Craniata</taxon>
        <taxon>Vertebrata</taxon>
        <taxon>Euteleostomi</taxon>
        <taxon>Mammalia</taxon>
        <taxon>Eutheria</taxon>
        <taxon>Euarchontoglires</taxon>
        <taxon>Primates</taxon>
        <taxon>Haplorrhini</taxon>
        <taxon>Catarrhini</taxon>
        <taxon>Cercopithecidae</taxon>
        <taxon>Cercopithecinae</taxon>
        <taxon>Macaca</taxon>
    </lineage>
</organism>
<evidence type="ECO:0000250" key="1">
    <source>
        <dbReference type="UniProtKB" id="P33535"/>
    </source>
</evidence>
<evidence type="ECO:0000250" key="2">
    <source>
        <dbReference type="UniProtKB" id="P35372"/>
    </source>
</evidence>
<evidence type="ECO:0000250" key="3">
    <source>
        <dbReference type="UniProtKB" id="P42866"/>
    </source>
</evidence>
<evidence type="ECO:0000250" key="4">
    <source>
        <dbReference type="UniProtKB" id="P97266"/>
    </source>
</evidence>
<evidence type="ECO:0000255" key="5"/>
<evidence type="ECO:0000255" key="6">
    <source>
        <dbReference type="PROSITE-ProRule" id="PRU00521"/>
    </source>
</evidence>
<evidence type="ECO:0000256" key="7">
    <source>
        <dbReference type="SAM" id="MobiDB-lite"/>
    </source>
</evidence>
<evidence type="ECO:0000269" key="8">
    <source>
    </source>
</evidence>
<feature type="chain" id="PRO_0000069974" description="Mu-type opioid receptor">
    <location>
        <begin position="1"/>
        <end position="400"/>
    </location>
</feature>
<feature type="topological domain" description="Extracellular" evidence="3">
    <location>
        <begin position="1"/>
        <end position="68"/>
    </location>
</feature>
<feature type="transmembrane region" description="Helical; Name=1" evidence="3">
    <location>
        <begin position="69"/>
        <end position="93"/>
    </location>
</feature>
<feature type="topological domain" description="Cytoplasmic" evidence="3">
    <location>
        <begin position="94"/>
        <end position="106"/>
    </location>
</feature>
<feature type="transmembrane region" description="Helical; Name=2" evidence="3">
    <location>
        <begin position="107"/>
        <end position="131"/>
    </location>
</feature>
<feature type="topological domain" description="Extracellular" evidence="3">
    <location>
        <begin position="132"/>
        <end position="142"/>
    </location>
</feature>
<feature type="transmembrane region" description="Helical; Name=3" evidence="3">
    <location>
        <begin position="143"/>
        <end position="165"/>
    </location>
</feature>
<feature type="topological domain" description="Cytoplasmic" evidence="3">
    <location>
        <begin position="166"/>
        <end position="185"/>
    </location>
</feature>
<feature type="transmembrane region" description="Helical; Name=4" evidence="3">
    <location>
        <begin position="186"/>
        <end position="207"/>
    </location>
</feature>
<feature type="topological domain" description="Extracellular" evidence="3">
    <location>
        <begin position="208"/>
        <end position="230"/>
    </location>
</feature>
<feature type="transmembrane region" description="Helical; Name=5" evidence="3">
    <location>
        <begin position="231"/>
        <end position="255"/>
    </location>
</feature>
<feature type="topological domain" description="Cytoplasmic" evidence="3">
    <location>
        <begin position="256"/>
        <end position="283"/>
    </location>
</feature>
<feature type="transmembrane region" description="Helical; Name=6" evidence="3">
    <location>
        <begin position="284"/>
        <end position="306"/>
    </location>
</feature>
<feature type="topological domain" description="Extracellular" evidence="3">
    <location>
        <begin position="307"/>
        <end position="314"/>
    </location>
</feature>
<feature type="transmembrane region" description="Helical; Name=7" evidence="3">
    <location>
        <begin position="315"/>
        <end position="338"/>
    </location>
</feature>
<feature type="topological domain" description="Cytoplasmic" evidence="3">
    <location>
        <begin position="339"/>
        <end position="400"/>
    </location>
</feature>
<feature type="region of interest" description="Disordered" evidence="7">
    <location>
        <begin position="364"/>
        <end position="386"/>
    </location>
</feature>
<feature type="short sequence motif" description="NPxxY; plays a role in stabilizing the activated conformation of the receptor" evidence="3">
    <location>
        <begin position="334"/>
        <end position="338"/>
    </location>
</feature>
<feature type="modified residue" description="Phosphotyrosine" evidence="1">
    <location>
        <position position="168"/>
    </location>
</feature>
<feature type="modified residue" description="Phosphoserine" evidence="3">
    <location>
        <position position="365"/>
    </location>
</feature>
<feature type="modified residue" description="Phosphothreonine" evidence="1">
    <location>
        <position position="372"/>
    </location>
</feature>
<feature type="modified residue" description="Phosphoserine" evidence="1">
    <location>
        <position position="377"/>
    </location>
</feature>
<feature type="modified residue" description="Phosphothreonine" evidence="1">
    <location>
        <position position="396"/>
    </location>
</feature>
<feature type="lipid moiety-binding region" description="S-palmitoyl cysteine" evidence="5">
    <location>
        <position position="353"/>
    </location>
</feature>
<feature type="glycosylation site" description="N-linked (GlcNAc...) asparagine" evidence="5">
    <location>
        <position position="9"/>
    </location>
</feature>
<feature type="glycosylation site" description="N-linked (GlcNAc...) asparagine" evidence="5">
    <location>
        <position position="12"/>
    </location>
</feature>
<feature type="glycosylation site" description="N-linked (GlcNAc...) asparagine" evidence="5">
    <location>
        <position position="33"/>
    </location>
</feature>
<feature type="glycosylation site" description="N-linked (GlcNAc...) asparagine" evidence="5">
    <location>
        <position position="40"/>
    </location>
</feature>
<feature type="glycosylation site" description="N-linked (GlcNAc...) asparagine" evidence="5">
    <location>
        <position position="48"/>
    </location>
</feature>
<feature type="disulfide bond" evidence="6">
    <location>
        <begin position="142"/>
        <end position="219"/>
    </location>
</feature>
<feature type="sequence variant" evidence="8">
    <original>R</original>
    <variation>P</variation>
    <location>
        <position position="26"/>
    </location>
</feature>
<feature type="sequence variant" evidence="8">
    <original>D</original>
    <variation>N</variation>
    <location>
        <position position="344"/>
    </location>
</feature>
<feature type="sequence variant" evidence="8">
    <original>L</original>
    <variation>P</variation>
    <location>
        <position position="392"/>
    </location>
</feature>
<comment type="function">
    <text evidence="1 2 3">Receptor for endogenous opioids such as beta-endorphin and endomorphin. Receptor for natural and synthetic opioids including morphine, heroin, DAMGO, fentanyl, etorphine, buprenorphin and methadone. Also activated by enkephalin peptides, such as Met-enkephalin or Met-enkephalin-Arg-Phe, with higher affinity for Met-enkephalin-Arg-Phe. Agonist binding to the receptor induces coupling to an inactive GDP-bound heterotrimeric G-protein complex and subsequent exchange of GDP for GTP in the G-protein alpha subunit leading to dissociation of the G-protein complex with the free GTP-bound G-protein alpha and the G-protein beta-gamma dimer activating downstream cellular effectors. The agonist- and cell type-specific activity is predominantly coupled to pertussis toxin-sensitive G(i) and G(o) G alpha proteins, GNAI1, GNAI2, GNAI3 and GNAO1, and to a lesser extent to pertussis toxin-insensitive G alpha proteins GNAZ and GNA15. They mediate an array of downstream cellular responses, including inhibition of adenylate cyclase activity and both N-type and L-type calcium channels, activation of inward rectifying potassium channels, mitogen-activated protein kinase (MAPK), phospholipase C (PLC), phosphoinositide/protein kinase (PKC), phosphoinositide 3-kinase (PI3K) and regulation of NF-kappa-B. Also couples to adenylate cyclase stimulatory G alpha proteins. The selective temporal coupling to G-proteins and subsequent signaling can be regulated by RGSZ proteins, such as RGS9, RGS17 and RGS4. Phosphorylation by members of the GPRK subfamily of Ser/Thr protein kinases and association with beta-arrestins is involved in short-term receptor desensitization. Beta-arrestins associate with the GPRK-phosphorylated receptor and uncouple it from the G-protein thus terminating signal transduction. The phosphorylated receptor is internalized through endocytosis via clathrin-coated pits which involves beta-arrestins. The activation of the ERK pathway occurs either in a G-protein-dependent or a beta-arrestin-dependent manner and is regulated by agonist-specific receptor phosphorylation. Acts as a class A G-protein coupled receptor (GPCR) which dissociates from beta-arrestin at or near the plasma membrane and undergoes rapid recycling. Receptor down-regulation pathways are varying with the agonist and occur dependent or independent of G-protein coupling. Endogenous ligands induce rapid desensitization, endocytosis and recycling. Heterooligomerization with other GPCRs can modulate agonist binding, signaling and trafficking properties. Involved in neurogenesis.</text>
</comment>
<comment type="subunit">
    <text evidence="1 2 3">Forms homooligomers and heterooligomers with other GPCRs, such as OPRD1, OPRK1, OPRL1, NPFFR2, ADRA2A, SSTR2, CNR1 and CCR5 (probably in dimeric forms). Interacts with heterotrimeric G proteins; interaction with a heterotrimeric complex containing GNAI1, GNB1 and GNG2 stabilizes the active conformation of the receptor and increases its affinity for endomorphin-2, the synthetic opioid peptide DAMGO and for morphinan agonists (By similarity). Interacts with PPL; the interaction disrupts agonist-mediated G-protein activation. Interacts (via C-terminus) with DNAJB4 (via C-terminus). Interacts with calmodulin; the interaction inhibits the constitutive activity of OPRM1; it abolishes basal and attenuates agonist-stimulated G-protein coupling. Interacts with FLNA, PLD2, RANBP9 and WLS and GPM6A (By similarity). Interacts with RTP4 (By similarity). Interacts with SYP and GNAS (By similarity). Interacts with RGS9, RGS17, RGS20, RGS4, PPP1R9B and HINT1.</text>
</comment>
<comment type="subcellular location">
    <subcellularLocation>
        <location evidence="3">Cell membrane</location>
        <topology evidence="3">Multi-pass membrane protein</topology>
    </subcellularLocation>
    <subcellularLocation>
        <location evidence="4">Cell projection</location>
        <location evidence="4">Axon</location>
    </subcellularLocation>
    <subcellularLocation>
        <location evidence="4">Perikaryon</location>
    </subcellularLocation>
    <subcellularLocation>
        <location evidence="4">Cell projection</location>
        <location evidence="4">Dendrite</location>
    </subcellularLocation>
    <subcellularLocation>
        <location evidence="4">Endosome</location>
    </subcellularLocation>
    <text evidence="4">Is rapidly internalized after agonist binding.</text>
</comment>
<comment type="PTM">
    <text evidence="1">Phosphorylated. Differentially phosphorylated in basal and agonist-induced conditions. Agonist-mediated phosphorylation modulates receptor internalization. Phosphorylated by GRK2 in a agonist-dependent manner. Phosphorylation at Tyr-168 requires receptor activation, is dependent on non-receptor protein tyrosine kinase Src and results in a decrease in agonist efficacy by reducing G-protein coupling efficiency. Phosphorylated on tyrosine residues; the phosphorylation is involved in agonist-induced G-protein-independent receptor down-regulation. Phosphorylation at Ser-377 is involved in G-protein-dependent but not beta-arrestin-dependent activation of the ERK pathway (By similarity).</text>
</comment>
<comment type="PTM">
    <text evidence="3">Ubiquitinated. A basal ubiquitination seems not to be related to degradation. Ubiquitination is increased upon formation of OPRM1:OPRD1 oligomers leading to proteasomal degradation; the ubiquitination is diminished by RTP4.</text>
</comment>
<comment type="polymorphism">
    <text evidence="8">Variant Arg-26 is associated with higher beta-endorphin affinity, lower blood cortisol levels and higher aggressive threat behavior.</text>
</comment>
<comment type="similarity">
    <text evidence="6">Belongs to the G-protein coupled receptor 1 family.</text>
</comment>
<proteinExistence type="evidence at transcript level"/>
<keyword id="KW-1003">Cell membrane</keyword>
<keyword id="KW-0966">Cell projection</keyword>
<keyword id="KW-1015">Disulfide bond</keyword>
<keyword id="KW-0967">Endosome</keyword>
<keyword id="KW-0297">G-protein coupled receptor</keyword>
<keyword id="KW-0325">Glycoprotein</keyword>
<keyword id="KW-0449">Lipoprotein</keyword>
<keyword id="KW-0472">Membrane</keyword>
<keyword id="KW-0564">Palmitate</keyword>
<keyword id="KW-0597">Phosphoprotein</keyword>
<keyword id="KW-0675">Receptor</keyword>
<keyword id="KW-1185">Reference proteome</keyword>
<keyword id="KW-0807">Transducer</keyword>
<keyword id="KW-0812">Transmembrane</keyword>
<keyword id="KW-1133">Transmembrane helix</keyword>
<keyword id="KW-0832">Ubl conjugation</keyword>